<keyword id="KW-0878">Amphibian defense peptide</keyword>
<keyword id="KW-0929">Antimicrobial</keyword>
<keyword id="KW-0903">Direct protein sequencing</keyword>
<keyword id="KW-0964">Secreted</keyword>
<reference evidence="4" key="1">
    <citation type="journal article" date="2016" name="J. Proteomics">
        <title>Peptidomic approach identifies cruzioseptins, a new family of potent antimicrobial peptides in the splendid leaf frog, Cruziohyla calcarifer.</title>
        <authorList>
            <person name="Proano-Bolanos C."/>
            <person name="Zhou M."/>
            <person name="Wang L."/>
            <person name="Coloma L.A."/>
            <person name="Chen T."/>
            <person name="Shaw C."/>
        </authorList>
    </citation>
    <scope>PROTEIN SEQUENCE</scope>
    <scope>SUBCELLULAR LOCATION</scope>
    <scope>MASS SPECTROMETRY</scope>
    <scope>IDENTIFICATION BY MASS SPECTROMETRY</scope>
    <source>
        <tissue evidence="3">Skin secretion</tissue>
    </source>
</reference>
<comment type="function">
    <text evidence="1">Has antimicrobial activity.</text>
</comment>
<comment type="subcellular location">
    <subcellularLocation>
        <location evidence="2">Secreted</location>
    </subcellularLocation>
</comment>
<comment type="tissue specificity">
    <text evidence="5">Expressed by the skin glands.</text>
</comment>
<comment type="mass spectrometry"/>
<comment type="similarity">
    <text evidence="4">Belongs to the frog skin active peptide (FSAP) family. Cruzioseptin subfamily.</text>
</comment>
<dbReference type="SMR" id="C0HK10"/>
<dbReference type="GO" id="GO:0005576">
    <property type="term" value="C:extracellular region"/>
    <property type="evidence" value="ECO:0000314"/>
    <property type="project" value="UniProtKB"/>
</dbReference>
<dbReference type="GO" id="GO:0006952">
    <property type="term" value="P:defense response"/>
    <property type="evidence" value="ECO:0007669"/>
    <property type="project" value="UniProtKB-KW"/>
</dbReference>
<dbReference type="InterPro" id="IPR022731">
    <property type="entry name" value="Dermaseptin_dom"/>
</dbReference>
<dbReference type="Pfam" id="PF12121">
    <property type="entry name" value="DD_K"/>
    <property type="match status" value="1"/>
</dbReference>
<organism evidence="3">
    <name type="scientific">Cruziohyla calcarifer</name>
    <name type="common">Splendid leaf frog</name>
    <name type="synonym">Agalychnis calcarifer</name>
    <dbReference type="NCBI Taxonomy" id="318249"/>
    <lineage>
        <taxon>Eukaryota</taxon>
        <taxon>Metazoa</taxon>
        <taxon>Chordata</taxon>
        <taxon>Craniata</taxon>
        <taxon>Vertebrata</taxon>
        <taxon>Euteleostomi</taxon>
        <taxon>Amphibia</taxon>
        <taxon>Batrachia</taxon>
        <taxon>Anura</taxon>
        <taxon>Neobatrachia</taxon>
        <taxon>Hyloidea</taxon>
        <taxon>Hylidae</taxon>
        <taxon>Phyllomedusinae</taxon>
        <taxon>Cruziohyla</taxon>
    </lineage>
</organism>
<protein>
    <recommendedName>
        <fullName evidence="3">Cruzioseptin-14</fullName>
        <shortName evidence="3">CZS-14</shortName>
    </recommendedName>
</protein>
<evidence type="ECO:0000250" key="1">
    <source>
        <dbReference type="UniProtKB" id="A0A193H362"/>
    </source>
</evidence>
<evidence type="ECO:0000269" key="2">
    <source>
    </source>
</evidence>
<evidence type="ECO:0000303" key="3">
    <source>
    </source>
</evidence>
<evidence type="ECO:0000305" key="4"/>
<evidence type="ECO:0000305" key="5">
    <source>
    </source>
</evidence>
<accession>C0HK10</accession>
<sequence>GFLDIVLHVGLAAGKAALNAVNEAVNQ</sequence>
<proteinExistence type="evidence at protein level"/>
<name>CZS14_CRUCA</name>
<feature type="peptide" id="PRO_0000439487" description="Cruzioseptin-14" evidence="2">
    <location>
        <begin position="1"/>
        <end position="27"/>
    </location>
</feature>